<comment type="function">
    <text evidence="1">Catalyzes the conversion of maltooligosaccharide into the non-reducing saccharide, maltooligosyl trehalose (alpha-maltooligosyl alpha-D-glucoside) by intramolecular transglycosylation.</text>
</comment>
<comment type="catalytic activity">
    <reaction>
        <text>4-[(1-&gt;4)-alpha-D-glucosyl](n-1)-D-glucose = 1-[(1-&gt;4)-alpha-D-glucosyl](n-1)-alpha-D-glucose</text>
        <dbReference type="Rhea" id="RHEA:13621"/>
        <dbReference type="Rhea" id="RHEA-COMP:14708"/>
        <dbReference type="Rhea" id="RHEA-COMP:14709"/>
        <dbReference type="ChEBI" id="CHEBI:140774"/>
        <dbReference type="ChEBI" id="CHEBI:140775"/>
        <dbReference type="EC" id="5.4.99.15"/>
    </reaction>
</comment>
<comment type="subunit">
    <text evidence="1">Monomer.</text>
</comment>
<comment type="similarity">
    <text evidence="2">Belongs to the glycosyl hydrolase 13 family.</text>
</comment>
<gene>
    <name type="primary">treY</name>
    <name type="ordered locus">MT1614</name>
</gene>
<sequence>MAFPVISTYRVQMRGRSNGFGFTFADAENLLDYLDDLGVSHLYLSPILTAVGGSTHGYDVTDPTTVSPELGGSDGLARLSAAARSRGMGLIVDIVPSHVGVGKPEQNAWWWDVLKFGRSSAYAEFFDIDWELGDGRIILPLLGSDSDVANLRVDGDLLRLGDLALPVAPGSGDGTGPAVHDRQHYRLVGWRHGLCGYRRFFSITSLAGLRQEDRAVFDASHAEVARWFTEGLVDGVRVDHLDGLSDPSGYLAQLRELLGPNAWIVVEKILAVDEALEPTLPVDGSTGYDVLREIGGVLVDPQGESPLTALVESAGVDYQEMPAMLADLKVHAAVHTLASELRRLRRCIAAAAGADHPLLPAAVAALLRHIGRYRCDYPGQAAVLPCALAETHSTTPQLAPGLQLIAAAVARGGEPAVRLQQLCGAVSAKAVEDCMFYRDARLVSLNEVGGEPRRFGVGAAEFHHRAATRARLWPRSMTTLSTHDTKRGEDVRARIGVLSQVPWLWAKFIGHAQAIAPAPDAVTGQFLWQNVFGVWPVSGEVSAALRGRLHTYAEKAIREAAWHTSWHNPNRAFEDDVHGWLDLVLDGPLASELTGLVAHLNSHAESDALAAKLLALTVPGVPDVYQGSELWDDSLVDPDNRRPVDYGTRRVALKALQHPKIRVLAAALRLRRTHPESFLGGAYHPVFAAGPAADHVVAFRRGDDILVAVTRWTVRLQQTGWDHTVLPLPDGSWTDALTGFTASGHTPAVELFADLPVVLLVRDNA</sequence>
<accession>P9WQ20</accession>
<accession>L0T775</accession>
<accession>Q10768</accession>
<proteinExistence type="inferred from homology"/>
<organism>
    <name type="scientific">Mycobacterium tuberculosis (strain CDC 1551 / Oshkosh)</name>
    <dbReference type="NCBI Taxonomy" id="83331"/>
    <lineage>
        <taxon>Bacteria</taxon>
        <taxon>Bacillati</taxon>
        <taxon>Actinomycetota</taxon>
        <taxon>Actinomycetes</taxon>
        <taxon>Mycobacteriales</taxon>
        <taxon>Mycobacteriaceae</taxon>
        <taxon>Mycobacterium</taxon>
        <taxon>Mycobacterium tuberculosis complex</taxon>
    </lineage>
</organism>
<name>TREY_MYCTO</name>
<feature type="chain" id="PRO_0000426852" description="Putative maltooligosyl trehalose synthase">
    <location>
        <begin position="1"/>
        <end position="765"/>
    </location>
</feature>
<evidence type="ECO:0000250" key="1"/>
<evidence type="ECO:0000305" key="2"/>
<reference key="1">
    <citation type="journal article" date="2002" name="J. Bacteriol.">
        <title>Whole-genome comparison of Mycobacterium tuberculosis clinical and laboratory strains.</title>
        <authorList>
            <person name="Fleischmann R.D."/>
            <person name="Alland D."/>
            <person name="Eisen J.A."/>
            <person name="Carpenter L."/>
            <person name="White O."/>
            <person name="Peterson J.D."/>
            <person name="DeBoy R.T."/>
            <person name="Dodson R.J."/>
            <person name="Gwinn M.L."/>
            <person name="Haft D.H."/>
            <person name="Hickey E.K."/>
            <person name="Kolonay J.F."/>
            <person name="Nelson W.C."/>
            <person name="Umayam L.A."/>
            <person name="Ermolaeva M.D."/>
            <person name="Salzberg S.L."/>
            <person name="Delcher A."/>
            <person name="Utterback T.R."/>
            <person name="Weidman J.F."/>
            <person name="Khouri H.M."/>
            <person name="Gill J."/>
            <person name="Mikula A."/>
            <person name="Bishai W."/>
            <person name="Jacobs W.R. Jr."/>
            <person name="Venter J.C."/>
            <person name="Fraser C.M."/>
        </authorList>
    </citation>
    <scope>NUCLEOTIDE SEQUENCE [LARGE SCALE GENOMIC DNA]</scope>
    <source>
        <strain>CDC 1551 / Oshkosh</strain>
    </source>
</reference>
<keyword id="KW-0413">Isomerase</keyword>
<keyword id="KW-1185">Reference proteome</keyword>
<dbReference type="EC" id="5.4.99.15"/>
<dbReference type="EMBL" id="AE000516">
    <property type="protein sequence ID" value="AAK45881.1"/>
    <property type="molecule type" value="Genomic_DNA"/>
</dbReference>
<dbReference type="PIR" id="H70763">
    <property type="entry name" value="H70763"/>
</dbReference>
<dbReference type="RefSeq" id="WP_003407790.1">
    <property type="nucleotide sequence ID" value="NZ_KK341227.1"/>
</dbReference>
<dbReference type="SMR" id="P9WQ20"/>
<dbReference type="CAZy" id="GH13">
    <property type="family name" value="Glycoside Hydrolase Family 13"/>
</dbReference>
<dbReference type="KEGG" id="mtc:MT1614"/>
<dbReference type="PATRIC" id="fig|83331.31.peg.1736"/>
<dbReference type="HOGENOM" id="CLU_005045_1_0_11"/>
<dbReference type="Proteomes" id="UP000001020">
    <property type="component" value="Chromosome"/>
</dbReference>
<dbReference type="GO" id="GO:0047470">
    <property type="term" value="F:(1,4)-alpha-D-glucan 1-alpha-D-glucosylmutase activity"/>
    <property type="evidence" value="ECO:0007669"/>
    <property type="project" value="UniProtKB-EC"/>
</dbReference>
<dbReference type="GO" id="GO:0030980">
    <property type="term" value="P:alpha-glucan catabolic process"/>
    <property type="evidence" value="ECO:0007669"/>
    <property type="project" value="TreeGrafter"/>
</dbReference>
<dbReference type="GO" id="GO:0005992">
    <property type="term" value="P:trehalose biosynthetic process"/>
    <property type="evidence" value="ECO:0007669"/>
    <property type="project" value="TreeGrafter"/>
</dbReference>
<dbReference type="CDD" id="cd11336">
    <property type="entry name" value="AmyAc_MTSase"/>
    <property type="match status" value="1"/>
</dbReference>
<dbReference type="Gene3D" id="3.20.20.80">
    <property type="entry name" value="Glycosidases"/>
    <property type="match status" value="1"/>
</dbReference>
<dbReference type="Gene3D" id="3.30.1590.10">
    <property type="entry name" value="Maltooligosyl trehalose synthase, domain 2"/>
    <property type="match status" value="1"/>
</dbReference>
<dbReference type="Gene3D" id="1.10.150.200">
    <property type="entry name" value="Maltooligosyl trehalose synthase, domain 3"/>
    <property type="match status" value="1"/>
</dbReference>
<dbReference type="Gene3D" id="1.10.10.470">
    <property type="entry name" value="Maltooligosyl trehalose synthase, domain 4"/>
    <property type="match status" value="1"/>
</dbReference>
<dbReference type="InterPro" id="IPR006047">
    <property type="entry name" value="Glyco_hydro_13_cat_dom"/>
</dbReference>
<dbReference type="InterPro" id="IPR017853">
    <property type="entry name" value="Glycoside_hydrolase_SF"/>
</dbReference>
<dbReference type="InterPro" id="IPR013797">
    <property type="entry name" value="Maltooligo_trehalose_synth_4"/>
</dbReference>
<dbReference type="InterPro" id="IPR012767">
    <property type="entry name" value="Trehalose_TreY"/>
</dbReference>
<dbReference type="NCBIfam" id="TIGR02401">
    <property type="entry name" value="trehalose_TreY"/>
    <property type="match status" value="1"/>
</dbReference>
<dbReference type="PANTHER" id="PTHR10357">
    <property type="entry name" value="ALPHA-AMYLASE FAMILY MEMBER"/>
    <property type="match status" value="1"/>
</dbReference>
<dbReference type="PANTHER" id="PTHR10357:SF216">
    <property type="entry name" value="MALTOOLIGOSYL TREHALOSE SYNTHASE-RELATED"/>
    <property type="match status" value="1"/>
</dbReference>
<dbReference type="Pfam" id="PF00128">
    <property type="entry name" value="Alpha-amylase"/>
    <property type="match status" value="1"/>
</dbReference>
<dbReference type="SMART" id="SM00642">
    <property type="entry name" value="Aamy"/>
    <property type="match status" value="1"/>
</dbReference>
<dbReference type="SUPFAM" id="SSF51445">
    <property type="entry name" value="(Trans)glycosidases"/>
    <property type="match status" value="1"/>
</dbReference>
<protein>
    <recommendedName>
        <fullName>Putative maltooligosyl trehalose synthase</fullName>
        <ecNumber>5.4.99.15</ecNumber>
    </recommendedName>
    <alternativeName>
        <fullName>(1,4)-alpha-D-glucan 1-alpha-D-glucosylmutase</fullName>
    </alternativeName>
</protein>